<organismHost>
    <name type="scientific">Homo sapiens</name>
    <name type="common">Human</name>
    <dbReference type="NCBI Taxonomy" id="9606"/>
</organismHost>
<gene>
    <name type="ORF">A40R</name>
</gene>
<comment type="subcellular location">
    <subcellularLocation>
        <location evidence="4">Host membrane</location>
        <topology evidence="4">Single-pass type II membrane protein</topology>
    </subcellularLocation>
    <text evidence="1">Not detected in virion membranes.</text>
</comment>
<comment type="similarity">
    <text evidence="4">Belongs to the poxviridae A40 protein family.</text>
</comment>
<organism>
    <name type="scientific">Vaccinia virus (strain Copenhagen)</name>
    <name type="common">VACV</name>
    <dbReference type="NCBI Taxonomy" id="10249"/>
    <lineage>
        <taxon>Viruses</taxon>
        <taxon>Varidnaviria</taxon>
        <taxon>Bamfordvirae</taxon>
        <taxon>Nucleocytoviricota</taxon>
        <taxon>Pokkesviricetes</taxon>
        <taxon>Chitovirales</taxon>
        <taxon>Poxviridae</taxon>
        <taxon>Chordopoxvirinae</taxon>
        <taxon>Orthopoxvirus</taxon>
        <taxon>Vaccinia virus</taxon>
    </lineage>
</organism>
<dbReference type="EMBL" id="M35027">
    <property type="protein sequence ID" value="AAA48171.1"/>
    <property type="molecule type" value="Genomic_DNA"/>
</dbReference>
<dbReference type="PIR" id="F42521">
    <property type="entry name" value="F42521"/>
</dbReference>
<dbReference type="SMR" id="P21063"/>
<dbReference type="Proteomes" id="UP000008269">
    <property type="component" value="Segment"/>
</dbReference>
<dbReference type="GO" id="GO:0033644">
    <property type="term" value="C:host cell membrane"/>
    <property type="evidence" value="ECO:0007669"/>
    <property type="project" value="UniProtKB-SubCell"/>
</dbReference>
<dbReference type="GO" id="GO:0016020">
    <property type="term" value="C:membrane"/>
    <property type="evidence" value="ECO:0007669"/>
    <property type="project" value="UniProtKB-KW"/>
</dbReference>
<dbReference type="GO" id="GO:0030246">
    <property type="term" value="F:carbohydrate binding"/>
    <property type="evidence" value="ECO:0007669"/>
    <property type="project" value="UniProtKB-KW"/>
</dbReference>
<dbReference type="GO" id="GO:0045954">
    <property type="term" value="P:positive regulation of natural killer cell mediated cytotoxicity"/>
    <property type="evidence" value="ECO:0007669"/>
    <property type="project" value="TreeGrafter"/>
</dbReference>
<dbReference type="GO" id="GO:0002223">
    <property type="term" value="P:stimulatory C-type lectin receptor signaling pathway"/>
    <property type="evidence" value="ECO:0007669"/>
    <property type="project" value="TreeGrafter"/>
</dbReference>
<dbReference type="Gene3D" id="3.10.100.10">
    <property type="entry name" value="Mannose-Binding Protein A, subunit A"/>
    <property type="match status" value="1"/>
</dbReference>
<dbReference type="InterPro" id="IPR001304">
    <property type="entry name" value="C-type_lectin-like"/>
</dbReference>
<dbReference type="InterPro" id="IPR016186">
    <property type="entry name" value="C-type_lectin-like/link_sf"/>
</dbReference>
<dbReference type="InterPro" id="IPR016187">
    <property type="entry name" value="CTDL_fold"/>
</dbReference>
<dbReference type="InterPro" id="IPR050919">
    <property type="entry name" value="NKG2/CD94_NK_receptors"/>
</dbReference>
<dbReference type="PANTHER" id="PTHR22800">
    <property type="entry name" value="C-TYPE LECTIN PROTEINS"/>
    <property type="match status" value="1"/>
</dbReference>
<dbReference type="PANTHER" id="PTHR22800:SF252">
    <property type="entry name" value="NATURAL KILLER CELLS ANTIGEN CD94"/>
    <property type="match status" value="1"/>
</dbReference>
<dbReference type="SMART" id="SM00034">
    <property type="entry name" value="CLECT"/>
    <property type="match status" value="1"/>
</dbReference>
<dbReference type="SUPFAM" id="SSF56436">
    <property type="entry name" value="C-type lectin-like"/>
    <property type="match status" value="1"/>
</dbReference>
<dbReference type="PROSITE" id="PS50041">
    <property type="entry name" value="C_TYPE_LECTIN_2"/>
    <property type="match status" value="1"/>
</dbReference>
<protein>
    <recommendedName>
        <fullName>Protein A40</fullName>
    </recommendedName>
</protein>
<reference key="1">
    <citation type="journal article" date="1990" name="Virology">
        <title>The complete DNA sequence of vaccinia virus.</title>
        <authorList>
            <person name="Goebel S.J."/>
            <person name="Johnson G.P."/>
            <person name="Perkus M.E."/>
            <person name="Davis S.W."/>
            <person name="Winslow J.P."/>
            <person name="Paoletti E."/>
        </authorList>
    </citation>
    <scope>NUCLEOTIDE SEQUENCE [LARGE SCALE GENOMIC DNA]</scope>
</reference>
<reference key="2">
    <citation type="journal article" date="1990" name="Virology">
        <title>Appendix to 'The complete DNA sequence of vaccinia virus'.</title>
        <authorList>
            <person name="Goebel S.J."/>
            <person name="Johnson G.P."/>
            <person name="Perkus M.E."/>
            <person name="Davis S.W."/>
            <person name="Winslow J.P."/>
            <person name="Paoletti E."/>
        </authorList>
    </citation>
    <scope>NUCLEOTIDE SEQUENCE [LARGE SCALE GENOMIC DNA]</scope>
</reference>
<feature type="chain" id="PRO_0000099329" description="Protein A40">
    <location>
        <begin position="1"/>
        <end position="168"/>
    </location>
</feature>
<feature type="topological domain" description="Cytoplasmic" evidence="2">
    <location>
        <begin position="1"/>
        <end position="9"/>
    </location>
</feature>
<feature type="transmembrane region" description="Helical; Signal-anchor for type II membrane protein" evidence="2">
    <location>
        <begin position="10"/>
        <end position="30"/>
    </location>
</feature>
<feature type="topological domain" description="Extracellular" evidence="2">
    <location>
        <begin position="31"/>
        <end position="168"/>
    </location>
</feature>
<feature type="domain" description="C-type lectin" evidence="3">
    <location>
        <begin position="63"/>
        <end position="168"/>
    </location>
</feature>
<keyword id="KW-0244">Early protein</keyword>
<keyword id="KW-1043">Host membrane</keyword>
<keyword id="KW-0430">Lectin</keyword>
<keyword id="KW-0472">Membrane</keyword>
<keyword id="KW-1185">Reference proteome</keyword>
<keyword id="KW-0735">Signal-anchor</keyword>
<keyword id="KW-0812">Transmembrane</keyword>
<keyword id="KW-1133">Transmembrane helix</keyword>
<name>A40_VACCC</name>
<accession>P21063</accession>
<proteinExistence type="inferred from homology"/>
<sequence length="168" mass="19313">MNKPKTDYAGYACCVICGLIVGIIFTATLLKVVERKLVHTPSIDKTIKDAYIREDCPTDWISYNNKCIHLSTDRKTWEEGRNTCKALNPNSDLIKIETPNELSFLRSLRRGYWVGESEILNQTTPYNFIAKNATKNGNIFVAQRILPNCIRVTLYNNYTTFLSYHYFG</sequence>
<evidence type="ECO:0000250" key="1"/>
<evidence type="ECO:0000255" key="2"/>
<evidence type="ECO:0000255" key="3">
    <source>
        <dbReference type="PROSITE-ProRule" id="PRU00040"/>
    </source>
</evidence>
<evidence type="ECO:0000305" key="4"/>